<evidence type="ECO:0000269" key="1">
    <source>
    </source>
</evidence>
<evidence type="ECO:0000305" key="2"/>
<feature type="peptide" id="PRO_0000043950" description="Gonadoliberin-2">
    <location>
        <begin position="1"/>
        <end position="10"/>
    </location>
</feature>
<feature type="modified residue" description="Pyrrolidone carboxylic acid" evidence="1">
    <location>
        <position position="1"/>
    </location>
</feature>
<feature type="modified residue" description="Glycine amide" evidence="1">
    <location>
        <position position="10"/>
    </location>
</feature>
<proteinExistence type="evidence at protein level"/>
<gene>
    <name type="primary">GNRH2</name>
</gene>
<comment type="function">
    <text>Stimulates the secretion of gonadotropins.</text>
</comment>
<comment type="subcellular location">
    <subcellularLocation>
        <location>Secreted</location>
    </subcellularLocation>
</comment>
<comment type="similarity">
    <text evidence="2">Belongs to the GnRH family.</text>
</comment>
<name>GON2_ALLMI</name>
<organism>
    <name type="scientific">Alligator mississippiensis</name>
    <name type="common">American alligator</name>
    <dbReference type="NCBI Taxonomy" id="8496"/>
    <lineage>
        <taxon>Eukaryota</taxon>
        <taxon>Metazoa</taxon>
        <taxon>Chordata</taxon>
        <taxon>Craniata</taxon>
        <taxon>Vertebrata</taxon>
        <taxon>Euteleostomi</taxon>
        <taxon>Archelosauria</taxon>
        <taxon>Archosauria</taxon>
        <taxon>Crocodylia</taxon>
        <taxon>Alligatoridae</taxon>
        <taxon>Alligatorinae</taxon>
        <taxon>Alligator</taxon>
    </lineage>
</organism>
<dbReference type="PIR" id="B60066">
    <property type="entry name" value="RHAQ2"/>
</dbReference>
<dbReference type="GO" id="GO:0005576">
    <property type="term" value="C:extracellular region"/>
    <property type="evidence" value="ECO:0007669"/>
    <property type="project" value="UniProtKB-SubCell"/>
</dbReference>
<dbReference type="GO" id="GO:0005179">
    <property type="term" value="F:hormone activity"/>
    <property type="evidence" value="ECO:0007669"/>
    <property type="project" value="UniProtKB-KW"/>
</dbReference>
<dbReference type="InterPro" id="IPR002012">
    <property type="entry name" value="GnRH"/>
</dbReference>
<dbReference type="Pfam" id="PF00446">
    <property type="entry name" value="GnRH"/>
    <property type="match status" value="1"/>
</dbReference>
<dbReference type="PROSITE" id="PS00473">
    <property type="entry name" value="GNRH"/>
    <property type="match status" value="1"/>
</dbReference>
<sequence length="10" mass="1254">QHWSHGWYPG</sequence>
<keyword id="KW-0027">Amidation</keyword>
<keyword id="KW-0903">Direct protein sequencing</keyword>
<keyword id="KW-0372">Hormone</keyword>
<keyword id="KW-0873">Pyrrolidone carboxylic acid</keyword>
<keyword id="KW-0964">Secreted</keyword>
<reference key="1">
    <citation type="journal article" date="1991" name="Regul. Pept.">
        <title>Primary structure of two forms of gonadotropin-releasing hormone from brains of the American alligator (Alligator mississippiensis).</title>
        <authorList>
            <person name="Lovejoy D.A."/>
            <person name="Fischer W.H."/>
            <person name="Parker D.B."/>
            <person name="McRory J.E."/>
            <person name="Park M."/>
            <person name="Lance V."/>
            <person name="Swanson P."/>
            <person name="Rivier J.E."/>
            <person name="Sherwood N.M."/>
        </authorList>
    </citation>
    <scope>PROTEIN SEQUENCE</scope>
    <scope>PYROGLUTAMATE FORMATION AT GLN-1</scope>
    <scope>AMIDATION AT GLY-10</scope>
    <source>
        <tissue>Brain</tissue>
    </source>
</reference>
<protein>
    <recommendedName>
        <fullName>Gonadoliberin-2</fullName>
    </recommendedName>
    <alternativeName>
        <fullName>Gonadoliberin II</fullName>
    </alternativeName>
    <alternativeName>
        <fullName>Gonadotropin-releasing hormone II</fullName>
        <shortName>GnRH-II</shortName>
    </alternativeName>
    <alternativeName>
        <fullName>Luliberin II</fullName>
    </alternativeName>
    <alternativeName>
        <fullName>Luteinizing hormone-releasing hormone II</fullName>
        <shortName>LH-RH II</shortName>
    </alternativeName>
</protein>
<accession>P68073</accession>
<accession>P20408</accession>
<accession>P37043</accession>
<accession>P81750</accession>